<evidence type="ECO:0000255" key="1">
    <source>
        <dbReference type="HAMAP-Rule" id="MF_00735"/>
    </source>
</evidence>
<protein>
    <recommendedName>
        <fullName evidence="1">Ribosomal protein L11 methyltransferase</fullName>
        <shortName evidence="1">L11 Mtase</shortName>
        <ecNumber evidence="1">2.1.1.-</ecNumber>
    </recommendedName>
</protein>
<name>PRMA_HELPS</name>
<sequence>MLKPMYYEFFFIFPKEQELFESFLLDTTHLALEESSLESLKAFDDKETIEFISQSSWHYFATHDPLKENLKEKPPHLKNFVILRSQKDLNDSLIPALKAFCLSLQQNLQSGFDFFYLSRNLASKDWLEAYKQAILPVQCAKFYIHPSWHQKPSHVATDDSIMIDPALAFGSGHHESTSICLELLSNLDLKRKNALDVGCGSGILSIALKKQGVSALSACDTDSLAVEETLKNFSLNQITLLAQDKVIHGSTQKIEGRFDIIVANIVADVIKSLYSEFVRLCNHTLILSGILETHLNSVLQIYYNGFEVLEQRQRNEWVALKLLKKQSIN</sequence>
<proteinExistence type="inferred from homology"/>
<keyword id="KW-0963">Cytoplasm</keyword>
<keyword id="KW-0489">Methyltransferase</keyword>
<keyword id="KW-0949">S-adenosyl-L-methionine</keyword>
<keyword id="KW-0808">Transferase</keyword>
<dbReference type="EC" id="2.1.1.-" evidence="1"/>
<dbReference type="EMBL" id="CP001072">
    <property type="protein sequence ID" value="ACD47846.1"/>
    <property type="molecule type" value="Genomic_DNA"/>
</dbReference>
<dbReference type="SMR" id="B2USL4"/>
<dbReference type="KEGG" id="hps:HPSH_01980"/>
<dbReference type="HOGENOM" id="CLU_049382_1_0_7"/>
<dbReference type="GO" id="GO:0005737">
    <property type="term" value="C:cytoplasm"/>
    <property type="evidence" value="ECO:0007669"/>
    <property type="project" value="UniProtKB-SubCell"/>
</dbReference>
<dbReference type="GO" id="GO:0016279">
    <property type="term" value="F:protein-lysine N-methyltransferase activity"/>
    <property type="evidence" value="ECO:0007669"/>
    <property type="project" value="RHEA"/>
</dbReference>
<dbReference type="GO" id="GO:0032259">
    <property type="term" value="P:methylation"/>
    <property type="evidence" value="ECO:0007669"/>
    <property type="project" value="UniProtKB-KW"/>
</dbReference>
<dbReference type="CDD" id="cd02440">
    <property type="entry name" value="AdoMet_MTases"/>
    <property type="match status" value="1"/>
</dbReference>
<dbReference type="Gene3D" id="3.40.50.150">
    <property type="entry name" value="Vaccinia Virus protein VP39"/>
    <property type="match status" value="1"/>
</dbReference>
<dbReference type="HAMAP" id="MF_00735">
    <property type="entry name" value="Methyltr_PrmA"/>
    <property type="match status" value="1"/>
</dbReference>
<dbReference type="InterPro" id="IPR050078">
    <property type="entry name" value="Ribosomal_L11_MeTrfase_PrmA"/>
</dbReference>
<dbReference type="InterPro" id="IPR004498">
    <property type="entry name" value="Ribosomal_PrmA_MeTrfase"/>
</dbReference>
<dbReference type="InterPro" id="IPR029063">
    <property type="entry name" value="SAM-dependent_MTases_sf"/>
</dbReference>
<dbReference type="NCBIfam" id="TIGR00406">
    <property type="entry name" value="prmA"/>
    <property type="match status" value="1"/>
</dbReference>
<dbReference type="PANTHER" id="PTHR43648">
    <property type="entry name" value="ELECTRON TRANSFER FLAVOPROTEIN BETA SUBUNIT LYSINE METHYLTRANSFERASE"/>
    <property type="match status" value="1"/>
</dbReference>
<dbReference type="PANTHER" id="PTHR43648:SF1">
    <property type="entry name" value="ELECTRON TRANSFER FLAVOPROTEIN BETA SUBUNIT LYSINE METHYLTRANSFERASE"/>
    <property type="match status" value="1"/>
</dbReference>
<dbReference type="Pfam" id="PF06325">
    <property type="entry name" value="PrmA"/>
    <property type="match status" value="1"/>
</dbReference>
<dbReference type="PIRSF" id="PIRSF000401">
    <property type="entry name" value="RPL11_MTase"/>
    <property type="match status" value="1"/>
</dbReference>
<dbReference type="SUPFAM" id="SSF53335">
    <property type="entry name" value="S-adenosyl-L-methionine-dependent methyltransferases"/>
    <property type="match status" value="1"/>
</dbReference>
<accession>B2USL4</accession>
<gene>
    <name evidence="1" type="primary">prmA</name>
    <name type="ordered locus">HPSH_01980</name>
</gene>
<reference key="1">
    <citation type="submission" date="2008-05" db="EMBL/GenBank/DDBJ databases">
        <title>Genome sequence of Helicobacter pylori from the remote Amazon: traces of Asian ancestry of the first Americans.</title>
        <authorList>
            <person name="Kersulyte D."/>
            <person name="Kalia A."/>
            <person name="Gilman R.H."/>
            <person name="Berg D.E."/>
        </authorList>
    </citation>
    <scope>NUCLEOTIDE SEQUENCE [LARGE SCALE GENOMIC DNA]</scope>
    <source>
        <strain>Shi470</strain>
    </source>
</reference>
<feature type="chain" id="PRO_1000192636" description="Ribosomal protein L11 methyltransferase">
    <location>
        <begin position="1"/>
        <end position="329"/>
    </location>
</feature>
<feature type="binding site" evidence="1">
    <location>
        <position position="177"/>
    </location>
    <ligand>
        <name>S-adenosyl-L-methionine</name>
        <dbReference type="ChEBI" id="CHEBI:59789"/>
    </ligand>
</feature>
<feature type="binding site" evidence="1">
    <location>
        <position position="198"/>
    </location>
    <ligand>
        <name>S-adenosyl-L-methionine</name>
        <dbReference type="ChEBI" id="CHEBI:59789"/>
    </ligand>
</feature>
<feature type="binding site" evidence="1">
    <location>
        <position position="220"/>
    </location>
    <ligand>
        <name>S-adenosyl-L-methionine</name>
        <dbReference type="ChEBI" id="CHEBI:59789"/>
    </ligand>
</feature>
<feature type="binding site" evidence="1">
    <location>
        <position position="264"/>
    </location>
    <ligand>
        <name>S-adenosyl-L-methionine</name>
        <dbReference type="ChEBI" id="CHEBI:59789"/>
    </ligand>
</feature>
<comment type="function">
    <text evidence="1">Methylates ribosomal protein L11.</text>
</comment>
<comment type="catalytic activity">
    <reaction evidence="1">
        <text>L-lysyl-[protein] + 3 S-adenosyl-L-methionine = N(6),N(6),N(6)-trimethyl-L-lysyl-[protein] + 3 S-adenosyl-L-homocysteine + 3 H(+)</text>
        <dbReference type="Rhea" id="RHEA:54192"/>
        <dbReference type="Rhea" id="RHEA-COMP:9752"/>
        <dbReference type="Rhea" id="RHEA-COMP:13826"/>
        <dbReference type="ChEBI" id="CHEBI:15378"/>
        <dbReference type="ChEBI" id="CHEBI:29969"/>
        <dbReference type="ChEBI" id="CHEBI:57856"/>
        <dbReference type="ChEBI" id="CHEBI:59789"/>
        <dbReference type="ChEBI" id="CHEBI:61961"/>
    </reaction>
</comment>
<comment type="subcellular location">
    <subcellularLocation>
        <location evidence="1">Cytoplasm</location>
    </subcellularLocation>
</comment>
<comment type="similarity">
    <text evidence="1">Belongs to the methyltransferase superfamily. PrmA family.</text>
</comment>
<organism>
    <name type="scientific">Helicobacter pylori (strain Shi470)</name>
    <dbReference type="NCBI Taxonomy" id="512562"/>
    <lineage>
        <taxon>Bacteria</taxon>
        <taxon>Pseudomonadati</taxon>
        <taxon>Campylobacterota</taxon>
        <taxon>Epsilonproteobacteria</taxon>
        <taxon>Campylobacterales</taxon>
        <taxon>Helicobacteraceae</taxon>
        <taxon>Helicobacter</taxon>
    </lineage>
</organism>